<gene>
    <name evidence="4" type="primary">INP1</name>
    <name evidence="6" type="ordered locus">At4g22600</name>
    <name evidence="7" type="ORF">F7K2.180</name>
</gene>
<name>INP1_ARATH</name>
<feature type="chain" id="PRO_0000437207" description="Protein INAPERTURATE POLLEN1">
    <location>
        <begin position="1"/>
        <end position="273"/>
    </location>
</feature>
<feature type="domain" description="DOG1" evidence="1">
    <location>
        <begin position="12"/>
        <end position="267"/>
    </location>
</feature>
<protein>
    <recommendedName>
        <fullName evidence="4">Protein INAPERTURATE POLLEN1</fullName>
    </recommendedName>
</protein>
<dbReference type="EMBL" id="AL033545">
    <property type="protein sequence ID" value="CAA22165.1"/>
    <property type="molecule type" value="Genomic_DNA"/>
</dbReference>
<dbReference type="EMBL" id="AL161557">
    <property type="protein sequence ID" value="CAB79215.1"/>
    <property type="molecule type" value="Genomic_DNA"/>
</dbReference>
<dbReference type="EMBL" id="CP002687">
    <property type="protein sequence ID" value="AEE84629.1"/>
    <property type="molecule type" value="Genomic_DNA"/>
</dbReference>
<dbReference type="EMBL" id="DQ459193">
    <property type="protein sequence ID" value="ABE97191.1"/>
    <property type="molecule type" value="Genomic_DNA"/>
</dbReference>
<dbReference type="EMBL" id="DQ653216">
    <property type="protein sequence ID" value="ABK28257.1"/>
    <property type="status" value="ALT_SEQ"/>
    <property type="molecule type" value="Genomic_DNA"/>
</dbReference>
<dbReference type="PIR" id="T05454">
    <property type="entry name" value="T05454"/>
</dbReference>
<dbReference type="RefSeq" id="NP_193991.1">
    <property type="nucleotide sequence ID" value="NM_118386.1"/>
</dbReference>
<dbReference type="SMR" id="Q9SUV9"/>
<dbReference type="STRING" id="3702.Q9SUV9"/>
<dbReference type="PaxDb" id="3702-AT4G22600.1"/>
<dbReference type="EnsemblPlants" id="AT4G22600.1">
    <property type="protein sequence ID" value="AT4G22600.1"/>
    <property type="gene ID" value="AT4G22600"/>
</dbReference>
<dbReference type="GeneID" id="828356"/>
<dbReference type="Gramene" id="AT4G22600.1">
    <property type="protein sequence ID" value="AT4G22600.1"/>
    <property type="gene ID" value="AT4G22600"/>
</dbReference>
<dbReference type="KEGG" id="ath:AT4G22600"/>
<dbReference type="Araport" id="AT4G22600"/>
<dbReference type="TAIR" id="AT4G22600">
    <property type="gene designation" value="INP1"/>
</dbReference>
<dbReference type="eggNOG" id="ENOG502R2CB">
    <property type="taxonomic scope" value="Eukaryota"/>
</dbReference>
<dbReference type="HOGENOM" id="CLU_1063214_0_0_1"/>
<dbReference type="InParanoid" id="Q9SUV9"/>
<dbReference type="OMA" id="QNWHVVM"/>
<dbReference type="OrthoDB" id="683795at2759"/>
<dbReference type="PhylomeDB" id="Q9SUV9"/>
<dbReference type="PRO" id="PR:Q9SUV9"/>
<dbReference type="Proteomes" id="UP000006548">
    <property type="component" value="Chromosome 4"/>
</dbReference>
<dbReference type="ExpressionAtlas" id="Q9SUV9">
    <property type="expression patterns" value="baseline and differential"/>
</dbReference>
<dbReference type="GO" id="GO:0005737">
    <property type="term" value="C:cytoplasm"/>
    <property type="evidence" value="ECO:0007669"/>
    <property type="project" value="UniProtKB-SubCell"/>
</dbReference>
<dbReference type="GO" id="GO:0043565">
    <property type="term" value="F:sequence-specific DNA binding"/>
    <property type="evidence" value="ECO:0007669"/>
    <property type="project" value="InterPro"/>
</dbReference>
<dbReference type="GO" id="GO:0006351">
    <property type="term" value="P:DNA-templated transcription"/>
    <property type="evidence" value="ECO:0007669"/>
    <property type="project" value="InterPro"/>
</dbReference>
<dbReference type="GO" id="GO:0010584">
    <property type="term" value="P:pollen exine formation"/>
    <property type="evidence" value="ECO:0000315"/>
    <property type="project" value="TAIR"/>
</dbReference>
<dbReference type="InterPro" id="IPR051886">
    <property type="entry name" value="Seed_Dev/Stress_Resp_Reg"/>
</dbReference>
<dbReference type="InterPro" id="IPR025422">
    <property type="entry name" value="TGA_domain"/>
</dbReference>
<dbReference type="PANTHER" id="PTHR46354">
    <property type="entry name" value="DOG1 DOMAIN-CONTAINING PROTEIN"/>
    <property type="match status" value="1"/>
</dbReference>
<dbReference type="PANTHER" id="PTHR46354:SF9">
    <property type="entry name" value="PROTEIN INAPERTURATE POLLEN1"/>
    <property type="match status" value="1"/>
</dbReference>
<dbReference type="Pfam" id="PF14144">
    <property type="entry name" value="DOG1"/>
    <property type="match status" value="1"/>
</dbReference>
<dbReference type="PROSITE" id="PS51806">
    <property type="entry name" value="DOG1"/>
    <property type="match status" value="1"/>
</dbReference>
<keyword id="KW-0963">Cytoplasm</keyword>
<keyword id="KW-1185">Reference proteome</keyword>
<sequence length="273" mass="31249">MPFSFFSRKKPSRRFNDFYEDWSKTLTENCLPLLRQSLSSAASASVLSSNVDLVLRHLVLYYETLDLAADHNTIPYLLFPSWRNSLETPFLFLGDIHPYLLTNLLRSFIDRENQDSDDEDEETSLDLVNQPLKMTMAWKDPSDELVKRIDQIECTMRLMVPGLMDRMRKTQRSFVARVSESWVSSYQVGKKKKLTATVATASTSVDEAAKIEMEELVSIFVDANRLRKSVIMDIVGATSEHQAALFLEGLCQFLAGFKDQILLQDFEILSLPN</sequence>
<evidence type="ECO:0000255" key="1">
    <source>
        <dbReference type="PROSITE-ProRule" id="PRU01147"/>
    </source>
</evidence>
<evidence type="ECO:0000269" key="2">
    <source>
    </source>
</evidence>
<evidence type="ECO:0000269" key="3">
    <source>
    </source>
</evidence>
<evidence type="ECO:0000303" key="4">
    <source>
    </source>
</evidence>
<evidence type="ECO:0000305" key="5"/>
<evidence type="ECO:0000312" key="6">
    <source>
        <dbReference type="Araport" id="AT4G22600"/>
    </source>
</evidence>
<evidence type="ECO:0000312" key="7">
    <source>
        <dbReference type="EMBL" id="CAA22165.1"/>
    </source>
</evidence>
<comment type="function">
    <text evidence="2 3">Required for the formation of pollen surface apertures, which arise by restriction of exine deposition at specific sites. The aperture length depends on the INP1 dosage (PubMed:23136373). Does not play a role in specifying the number or position of apertures (PubMed:27177036). Acts in a sporophytic manner (PubMed:23136373).</text>
</comment>
<comment type="subcellular location">
    <subcellularLocation>
        <location evidence="2">Cytoplasm</location>
    </subcellularLocation>
    <text evidence="2">Located at 3 equidistant spots close to the pollen equator. 3-D reconstruction demonstrates that INP1 is restricted not to just 3 spots, but to 3 long and narrow regions underlying the position of future apertures.</text>
</comment>
<comment type="tissue specificity">
    <text evidence="2">Expressed only in anthers and in pollen. Not detected in other flower tissues, stems, leaves and siliques.</text>
</comment>
<comment type="developmental stage">
    <text evidence="2">Detected in stage 9 buds and appears to be confined to microspores.</text>
</comment>
<comment type="disruption phenotype">
    <text evidence="2">Normal and fertile plants with pollen having normal reticulate exine patterning but completely lacking apertures.</text>
</comment>
<comment type="miscellaneous">
    <text evidence="3">The number and position of apertures is strongly correlated with pollen ploidy.</text>
</comment>
<comment type="sequence caution" evidence="5">
    <conflict type="erroneous termination">
        <sequence resource="EMBL-CDS" id="ABK28257"/>
    </conflict>
    <text>Extended C-terminus.</text>
</comment>
<proteinExistence type="evidence at transcript level"/>
<reference key="1">
    <citation type="journal article" date="1999" name="Nature">
        <title>Sequence and analysis of chromosome 4 of the plant Arabidopsis thaliana.</title>
        <authorList>
            <person name="Mayer K.F.X."/>
            <person name="Schueller C."/>
            <person name="Wambutt R."/>
            <person name="Murphy G."/>
            <person name="Volckaert G."/>
            <person name="Pohl T."/>
            <person name="Duesterhoeft A."/>
            <person name="Stiekema W."/>
            <person name="Entian K.-D."/>
            <person name="Terryn N."/>
            <person name="Harris B."/>
            <person name="Ansorge W."/>
            <person name="Brandt P."/>
            <person name="Grivell L.A."/>
            <person name="Rieger M."/>
            <person name="Weichselgartner M."/>
            <person name="de Simone V."/>
            <person name="Obermaier B."/>
            <person name="Mache R."/>
            <person name="Mueller M."/>
            <person name="Kreis M."/>
            <person name="Delseny M."/>
            <person name="Puigdomenech P."/>
            <person name="Watson M."/>
            <person name="Schmidtheini T."/>
            <person name="Reichert B."/>
            <person name="Portetelle D."/>
            <person name="Perez-Alonso M."/>
            <person name="Boutry M."/>
            <person name="Bancroft I."/>
            <person name="Vos P."/>
            <person name="Hoheisel J."/>
            <person name="Zimmermann W."/>
            <person name="Wedler H."/>
            <person name="Ridley P."/>
            <person name="Langham S.-A."/>
            <person name="McCullagh B."/>
            <person name="Bilham L."/>
            <person name="Robben J."/>
            <person name="van der Schueren J."/>
            <person name="Grymonprez B."/>
            <person name="Chuang Y.-J."/>
            <person name="Vandenbussche F."/>
            <person name="Braeken M."/>
            <person name="Weltjens I."/>
            <person name="Voet M."/>
            <person name="Bastiaens I."/>
            <person name="Aert R."/>
            <person name="Defoor E."/>
            <person name="Weitzenegger T."/>
            <person name="Bothe G."/>
            <person name="Ramsperger U."/>
            <person name="Hilbert H."/>
            <person name="Braun M."/>
            <person name="Holzer E."/>
            <person name="Brandt A."/>
            <person name="Peters S."/>
            <person name="van Staveren M."/>
            <person name="Dirkse W."/>
            <person name="Mooijman P."/>
            <person name="Klein Lankhorst R."/>
            <person name="Rose M."/>
            <person name="Hauf J."/>
            <person name="Koetter P."/>
            <person name="Berneiser S."/>
            <person name="Hempel S."/>
            <person name="Feldpausch M."/>
            <person name="Lamberth S."/>
            <person name="Van den Daele H."/>
            <person name="De Keyser A."/>
            <person name="Buysshaert C."/>
            <person name="Gielen J."/>
            <person name="Villarroel R."/>
            <person name="De Clercq R."/>
            <person name="van Montagu M."/>
            <person name="Rogers J."/>
            <person name="Cronin A."/>
            <person name="Quail M.A."/>
            <person name="Bray-Allen S."/>
            <person name="Clark L."/>
            <person name="Doggett J."/>
            <person name="Hall S."/>
            <person name="Kay M."/>
            <person name="Lennard N."/>
            <person name="McLay K."/>
            <person name="Mayes R."/>
            <person name="Pettett A."/>
            <person name="Rajandream M.A."/>
            <person name="Lyne M."/>
            <person name="Benes V."/>
            <person name="Rechmann S."/>
            <person name="Borkova D."/>
            <person name="Bloecker H."/>
            <person name="Scharfe M."/>
            <person name="Grimm M."/>
            <person name="Loehnert T.-H."/>
            <person name="Dose S."/>
            <person name="de Haan M."/>
            <person name="Maarse A.C."/>
            <person name="Schaefer M."/>
            <person name="Mueller-Auer S."/>
            <person name="Gabel C."/>
            <person name="Fuchs M."/>
            <person name="Fartmann B."/>
            <person name="Granderath K."/>
            <person name="Dauner D."/>
            <person name="Herzl A."/>
            <person name="Neumann S."/>
            <person name="Argiriou A."/>
            <person name="Vitale D."/>
            <person name="Liguori R."/>
            <person name="Piravandi E."/>
            <person name="Massenet O."/>
            <person name="Quigley F."/>
            <person name="Clabauld G."/>
            <person name="Muendlein A."/>
            <person name="Felber R."/>
            <person name="Schnabl S."/>
            <person name="Hiller R."/>
            <person name="Schmidt W."/>
            <person name="Lecharny A."/>
            <person name="Aubourg S."/>
            <person name="Chefdor F."/>
            <person name="Cooke R."/>
            <person name="Berger C."/>
            <person name="Monfort A."/>
            <person name="Casacuberta E."/>
            <person name="Gibbons T."/>
            <person name="Weber N."/>
            <person name="Vandenbol M."/>
            <person name="Bargues M."/>
            <person name="Terol J."/>
            <person name="Torres A."/>
            <person name="Perez-Perez A."/>
            <person name="Purnelle B."/>
            <person name="Bent E."/>
            <person name="Johnson S."/>
            <person name="Tacon D."/>
            <person name="Jesse T."/>
            <person name="Heijnen L."/>
            <person name="Schwarz S."/>
            <person name="Scholler P."/>
            <person name="Heber S."/>
            <person name="Francs P."/>
            <person name="Bielke C."/>
            <person name="Frishman D."/>
            <person name="Haase D."/>
            <person name="Lemcke K."/>
            <person name="Mewes H.-W."/>
            <person name="Stocker S."/>
            <person name="Zaccaria P."/>
            <person name="Bevan M."/>
            <person name="Wilson R.K."/>
            <person name="de la Bastide M."/>
            <person name="Habermann K."/>
            <person name="Parnell L."/>
            <person name="Dedhia N."/>
            <person name="Gnoj L."/>
            <person name="Schutz K."/>
            <person name="Huang E."/>
            <person name="Spiegel L."/>
            <person name="Sekhon M."/>
            <person name="Murray J."/>
            <person name="Sheet P."/>
            <person name="Cordes M."/>
            <person name="Abu-Threideh J."/>
            <person name="Stoneking T."/>
            <person name="Kalicki J."/>
            <person name="Graves T."/>
            <person name="Harmon G."/>
            <person name="Edwards J."/>
            <person name="Latreille P."/>
            <person name="Courtney L."/>
            <person name="Cloud J."/>
            <person name="Abbott A."/>
            <person name="Scott K."/>
            <person name="Johnson D."/>
            <person name="Minx P."/>
            <person name="Bentley D."/>
            <person name="Fulton B."/>
            <person name="Miller N."/>
            <person name="Greco T."/>
            <person name="Kemp K."/>
            <person name="Kramer J."/>
            <person name="Fulton L."/>
            <person name="Mardis E."/>
            <person name="Dante M."/>
            <person name="Pepin K."/>
            <person name="Hillier L.W."/>
            <person name="Nelson J."/>
            <person name="Spieth J."/>
            <person name="Ryan E."/>
            <person name="Andrews S."/>
            <person name="Geisel C."/>
            <person name="Layman D."/>
            <person name="Du H."/>
            <person name="Ali J."/>
            <person name="Berghoff A."/>
            <person name="Jones K."/>
            <person name="Drone K."/>
            <person name="Cotton M."/>
            <person name="Joshu C."/>
            <person name="Antonoiu B."/>
            <person name="Zidanic M."/>
            <person name="Strong C."/>
            <person name="Sun H."/>
            <person name="Lamar B."/>
            <person name="Yordan C."/>
            <person name="Ma P."/>
            <person name="Zhong J."/>
            <person name="Preston R."/>
            <person name="Vil D."/>
            <person name="Shekher M."/>
            <person name="Matero A."/>
            <person name="Shah R."/>
            <person name="Swaby I.K."/>
            <person name="O'Shaughnessy A."/>
            <person name="Rodriguez M."/>
            <person name="Hoffman J."/>
            <person name="Till S."/>
            <person name="Granat S."/>
            <person name="Shohdy N."/>
            <person name="Hasegawa A."/>
            <person name="Hameed A."/>
            <person name="Lodhi M."/>
            <person name="Johnson A."/>
            <person name="Chen E."/>
            <person name="Marra M.A."/>
            <person name="Martienssen R."/>
            <person name="McCombie W.R."/>
        </authorList>
    </citation>
    <scope>NUCLEOTIDE SEQUENCE [LARGE SCALE GENOMIC DNA]</scope>
    <source>
        <strain>cv. Columbia</strain>
    </source>
</reference>
<reference key="2">
    <citation type="journal article" date="2017" name="Plant J.">
        <title>Araport11: a complete reannotation of the Arabidopsis thaliana reference genome.</title>
        <authorList>
            <person name="Cheng C.Y."/>
            <person name="Krishnakumar V."/>
            <person name="Chan A.P."/>
            <person name="Thibaud-Nissen F."/>
            <person name="Schobel S."/>
            <person name="Town C.D."/>
        </authorList>
    </citation>
    <scope>GENOME REANNOTATION</scope>
    <source>
        <strain>cv. Columbia</strain>
    </source>
</reference>
<reference key="3">
    <citation type="journal article" date="2006" name="Plant Biotechnol. J.">
        <title>Simultaneous high-throughput recombinational cloning of open reading frames in closed and open configurations.</title>
        <authorList>
            <person name="Underwood B.A."/>
            <person name="Vanderhaeghen R."/>
            <person name="Whitford R."/>
            <person name="Town C.D."/>
            <person name="Hilson P."/>
        </authorList>
    </citation>
    <scope>NUCLEOTIDE SEQUENCE [LARGE SCALE GENOMIC DNA]</scope>
    <source>
        <strain>cv. Columbia</strain>
    </source>
</reference>
<reference key="4">
    <citation type="journal article" date="2012" name="Plant Cell">
        <title>The novel plant protein INAPERTURATE POLLEN1 marks distinct cellular domains and controls formation of apertures in the Arabidopsis pollen exine.</title>
        <authorList>
            <person name="Dobritsa A.A."/>
            <person name="Coerper D."/>
        </authorList>
    </citation>
    <scope>FUNCTION</scope>
    <scope>TISSUE SPECIFICITY</scope>
    <scope>DEVELOPMENTAL STAGE</scope>
    <scope>SUBCELLULAR LOCATION</scope>
    <scope>DISRUPTION PHENOTYPE</scope>
</reference>
<reference key="5">
    <citation type="journal article" date="2016" name="PLoS Genet.">
        <title>A ploidy-sensitive mechanism regulates aperture formation on the Arabidopsis pollen surface and guides localization of the aperture factor INP1.</title>
        <authorList>
            <person name="Reeder S.H."/>
            <person name="Lee B.H."/>
            <person name="Fox R."/>
            <person name="Dobritsa A.A."/>
        </authorList>
    </citation>
    <scope>FUNCTION</scope>
    <scope>MISCELLANEOUS</scope>
</reference>
<organism>
    <name type="scientific">Arabidopsis thaliana</name>
    <name type="common">Mouse-ear cress</name>
    <dbReference type="NCBI Taxonomy" id="3702"/>
    <lineage>
        <taxon>Eukaryota</taxon>
        <taxon>Viridiplantae</taxon>
        <taxon>Streptophyta</taxon>
        <taxon>Embryophyta</taxon>
        <taxon>Tracheophyta</taxon>
        <taxon>Spermatophyta</taxon>
        <taxon>Magnoliopsida</taxon>
        <taxon>eudicotyledons</taxon>
        <taxon>Gunneridae</taxon>
        <taxon>Pentapetalae</taxon>
        <taxon>rosids</taxon>
        <taxon>malvids</taxon>
        <taxon>Brassicales</taxon>
        <taxon>Brassicaceae</taxon>
        <taxon>Camelineae</taxon>
        <taxon>Arabidopsis</taxon>
    </lineage>
</organism>
<accession>Q9SUV9</accession>
<accession>A0MF90</accession>